<comment type="cofactor">
    <cofactor evidence="1">
        <name>Cu(2+)</name>
        <dbReference type="ChEBI" id="CHEBI:29036"/>
    </cofactor>
    <text evidence="1">Binds 2 copper ions per subunit.</text>
</comment>
<comment type="subcellular location">
    <subcellularLocation>
        <location evidence="5">Membrane</location>
        <topology evidence="5">Single-pass type I membrane protein</topology>
    </subcellularLocation>
</comment>
<comment type="tissue specificity">
    <text evidence="4">Expressed at low levels in thymus and testis.</text>
</comment>
<comment type="similarity">
    <text evidence="5">Belongs to the copper type II ascorbate-dependent monooxygenase family.</text>
</comment>
<feature type="signal peptide" evidence="2">
    <location>
        <begin position="1"/>
        <end position="21"/>
    </location>
</feature>
<feature type="chain" id="PRO_0000305224" description="DBH-like monooxygenase protein 2">
    <location>
        <begin position="22"/>
        <end position="619"/>
    </location>
</feature>
<feature type="topological domain" description="Extracellular" evidence="2">
    <location>
        <begin position="22"/>
        <end position="594"/>
    </location>
</feature>
<feature type="transmembrane region" description="Helical" evidence="2">
    <location>
        <begin position="595"/>
        <end position="615"/>
    </location>
</feature>
<feature type="topological domain" description="Cytoplasmic" evidence="2">
    <location>
        <begin position="616"/>
        <end position="619"/>
    </location>
</feature>
<feature type="domain" description="DOMON" evidence="3">
    <location>
        <begin position="40"/>
        <end position="156"/>
    </location>
</feature>
<feature type="active site" evidence="2">
    <location>
        <position position="209"/>
    </location>
</feature>
<feature type="active site" evidence="2">
    <location>
        <position position="390"/>
    </location>
</feature>
<feature type="binding site" evidence="1">
    <location>
        <position position="241"/>
    </location>
    <ligand>
        <name>Cu cation</name>
        <dbReference type="ChEBI" id="CHEBI:23378"/>
        <label>A</label>
    </ligand>
</feature>
<feature type="binding site" evidence="1">
    <location>
        <position position="242"/>
    </location>
    <ligand>
        <name>Cu cation</name>
        <dbReference type="ChEBI" id="CHEBI:23378"/>
        <label>A</label>
    </ligand>
</feature>
<feature type="binding site" evidence="1">
    <location>
        <position position="309"/>
    </location>
    <ligand>
        <name>Cu cation</name>
        <dbReference type="ChEBI" id="CHEBI:23378"/>
        <label>A</label>
    </ligand>
</feature>
<feature type="binding site" evidence="1">
    <location>
        <position position="390"/>
    </location>
    <ligand>
        <name>Cu cation</name>
        <dbReference type="ChEBI" id="CHEBI:23378"/>
        <label>B</label>
    </ligand>
</feature>
<feature type="binding site" evidence="1">
    <location>
        <position position="392"/>
    </location>
    <ligand>
        <name>Cu cation</name>
        <dbReference type="ChEBI" id="CHEBI:23378"/>
        <label>B</label>
    </ligand>
</feature>
<feature type="binding site" evidence="1">
    <location>
        <position position="465"/>
    </location>
    <ligand>
        <name>Cu cation</name>
        <dbReference type="ChEBI" id="CHEBI:23378"/>
        <label>B</label>
    </ligand>
</feature>
<feature type="glycosylation site" description="N-linked (GlcNAc...) asparagine" evidence="2">
    <location>
        <position position="250"/>
    </location>
</feature>
<feature type="glycosylation site" description="N-linked (GlcNAc...) asparagine" evidence="2">
    <location>
        <position position="405"/>
    </location>
</feature>
<feature type="glycosylation site" description="N-linked (GlcNAc...) asparagine" evidence="2">
    <location>
        <position position="477"/>
    </location>
</feature>
<feature type="disulfide bond" evidence="1">
    <location>
        <begin position="211"/>
        <end position="261"/>
    </location>
</feature>
<feature type="disulfide bond" evidence="1">
    <location>
        <begin position="248"/>
        <end position="271"/>
    </location>
</feature>
<feature type="disulfide bond" evidence="1">
    <location>
        <begin position="366"/>
        <end position="481"/>
    </location>
</feature>
<feature type="disulfide bond" evidence="1">
    <location>
        <begin position="444"/>
        <end position="466"/>
    </location>
</feature>
<feature type="sequence conflict" description="In Ref. 2; BAB62024." evidence="5" ref="2">
    <original>D</original>
    <variation>G</variation>
    <location>
        <position position="289"/>
    </location>
</feature>
<feature type="sequence conflict" description="In Ref. 2; BAB62024." evidence="5" ref="2">
    <original>L</original>
    <variation>V</variation>
    <location>
        <position position="561"/>
    </location>
</feature>
<sequence length="619" mass="69397">MACVLLFRLFLLLVLAAFSQGKRLGPTSPLRYSRFLDPSRAVFLRWDFDYEAEIITFELQVQTTGWVGLGITDRYTFVGSDLVVGGVLPNGNVYFSDQHLLDEDTLEQDGSQDAELLRLTEDAVSTTMRFSRPFRTCDPHDRDITSDTMRVLAAYGPDDIPKMSREHTFVKSIFLLQMLQYDDQDAPEDTIIHDLKISNFIIPEDDTTYACTFLPLPIVSKKHHIYKFEPILVERNETMVHHVLVYACGNSSVLPTGIGECYGSDPAFSLCSHVIAGWAVGGLSYQFPDDVGISIGTPFDPQWIRLEIHYSNFQNLPGIRDTSGMRLFYTSHLRKYDMGVLQLGISVFPIHFIPPGAEAFLSYGLCKTDKFEELNGAPVSDIYISACLLHTHLAGRSLQALQYRNGTQLQVVCKDFSYDFNLQESRDLPHPVVIKPGDELLIECHYQTLDRDFMTFGGASTINEMCLIFFFYYPRINISSCMGYPDIIYVTNELGEEASENPMENLMVLDNVEWTPENIKKAEKACKESQQTVLIKTIDEEVENTTGWIPDIIPTPRGPCLESTGGKVEPQDNTPAGFRAVPLALSGSNTATLRPLPMIAVLFLQGSLSCLLAMLQTGV</sequence>
<proteinExistence type="evidence at transcript level"/>
<gene>
    <name type="primary">Moxd2</name>
    <name type="synonym">Dbhl</name>
    <name type="synonym">Dbhl1</name>
</gene>
<reference key="1">
    <citation type="journal article" date="2001" name="J. Immunol.">
        <title>Differential transcriptional regulation of individual TCR V beta segments before gene rearrangement.</title>
        <authorList>
            <person name="Chen F."/>
            <person name="Rowen L."/>
            <person name="Hood L."/>
            <person name="Rothenberg E.V."/>
        </authorList>
    </citation>
    <scope>NUCLEOTIDE SEQUENCE [GENOMIC DNA]</scope>
</reference>
<reference key="2">
    <citation type="submission" date="2001-07" db="EMBL/GenBank/DDBJ databases">
        <title>Thymus-specific expression of dopamine beta-hydroxylase-like gene mRNA in mice.</title>
        <authorList>
            <person name="Matsuda M."/>
            <person name="Horseman N.D."/>
        </authorList>
    </citation>
    <scope>NUCLEOTIDE SEQUENCE [MRNA]</scope>
    <source>
        <strain>C57BL/6J</strain>
        <tissue>Thymus</tissue>
    </source>
</reference>
<reference key="3">
    <citation type="journal article" date="2001" name="Dev. Biol.">
        <title>DBHR, a gene with homology to dopamine beta-hydroxylase, is expressed in the neural crest throughout early development.</title>
        <authorList>
            <person name="Knecht A.K."/>
            <person name="Bronner-Fraser M."/>
        </authorList>
    </citation>
    <scope>IDENTIFICATION</scope>
    <source>
        <tissue>Embryo</tissue>
    </source>
</reference>
<reference key="4">
    <citation type="journal article" date="2004" name="J. Biol. Chem.">
        <title>Monooxygenase X, a member of the copper-dependent monooxygenase family localized to the endoplasmic reticulum.</title>
        <authorList>
            <person name="Xin X."/>
            <person name="Mains R.E."/>
            <person name="Eipper B.A."/>
        </authorList>
    </citation>
    <scope>TISSUE SPECIFICITY</scope>
</reference>
<name>MOXD2_MOUSE</name>
<keyword id="KW-0186">Copper</keyword>
<keyword id="KW-1015">Disulfide bond</keyword>
<keyword id="KW-0325">Glycoprotein</keyword>
<keyword id="KW-0472">Membrane</keyword>
<keyword id="KW-0479">Metal-binding</keyword>
<keyword id="KW-0503">Monooxygenase</keyword>
<keyword id="KW-0560">Oxidoreductase</keyword>
<keyword id="KW-1185">Reference proteome</keyword>
<keyword id="KW-0732">Signal</keyword>
<keyword id="KW-0812">Transmembrane</keyword>
<keyword id="KW-1133">Transmembrane helix</keyword>
<evidence type="ECO:0000250" key="1"/>
<evidence type="ECO:0000255" key="2"/>
<evidence type="ECO:0000255" key="3">
    <source>
        <dbReference type="PROSITE-ProRule" id="PRU00246"/>
    </source>
</evidence>
<evidence type="ECO:0000269" key="4">
    <source>
    </source>
</evidence>
<evidence type="ECO:0000305" key="5"/>
<protein>
    <recommendedName>
        <fullName>DBH-like monooxygenase protein 2</fullName>
        <ecNumber>1.14.17.-</ecNumber>
    </recommendedName>
    <alternativeName>
        <fullName>Dopamine-beta-hydroxylase-like protein</fullName>
    </alternativeName>
</protein>
<accession>Q7TT41</accession>
<accession>Q91XT2</accession>
<organism>
    <name type="scientific">Mus musculus</name>
    <name type="common">Mouse</name>
    <dbReference type="NCBI Taxonomy" id="10090"/>
    <lineage>
        <taxon>Eukaryota</taxon>
        <taxon>Metazoa</taxon>
        <taxon>Chordata</taxon>
        <taxon>Craniata</taxon>
        <taxon>Vertebrata</taxon>
        <taxon>Euteleostomi</taxon>
        <taxon>Mammalia</taxon>
        <taxon>Eutheria</taxon>
        <taxon>Euarchontoglires</taxon>
        <taxon>Glires</taxon>
        <taxon>Rodentia</taxon>
        <taxon>Myomorpha</taxon>
        <taxon>Muroidea</taxon>
        <taxon>Muridae</taxon>
        <taxon>Murinae</taxon>
        <taxon>Mus</taxon>
        <taxon>Mus</taxon>
    </lineage>
</organism>
<dbReference type="EC" id="1.14.17.-"/>
<dbReference type="EMBL" id="AE000663">
    <property type="protein sequence ID" value="AAB69054.1"/>
    <property type="molecule type" value="Genomic_DNA"/>
</dbReference>
<dbReference type="EMBL" id="AB065134">
    <property type="protein sequence ID" value="BAB62024.1"/>
    <property type="molecule type" value="mRNA"/>
</dbReference>
<dbReference type="CCDS" id="CCDS20039.1"/>
<dbReference type="RefSeq" id="NP_647457.2">
    <property type="nucleotide sequence ID" value="NM_139296.2"/>
</dbReference>
<dbReference type="SMR" id="Q7TT41"/>
<dbReference type="FunCoup" id="Q7TT41">
    <property type="interactions" value="16"/>
</dbReference>
<dbReference type="STRING" id="10090.ENSMUSP00000031937"/>
<dbReference type="GlyCosmos" id="Q7TT41">
    <property type="glycosylation" value="3 sites, No reported glycans"/>
</dbReference>
<dbReference type="GlyGen" id="Q7TT41">
    <property type="glycosylation" value="4 sites"/>
</dbReference>
<dbReference type="PaxDb" id="10090-ENSMUSP00000031937"/>
<dbReference type="ProteomicsDB" id="291389"/>
<dbReference type="TopDownProteomics" id="Q7TT41"/>
<dbReference type="DNASU" id="194357"/>
<dbReference type="Ensembl" id="ENSMUST00000031937.4">
    <property type="protein sequence ID" value="ENSMUSP00000031937.4"/>
    <property type="gene ID" value="ENSMUSG00000029885.4"/>
</dbReference>
<dbReference type="GeneID" id="194357"/>
<dbReference type="KEGG" id="mmu:194357"/>
<dbReference type="UCSC" id="uc009bnh.1">
    <property type="organism name" value="mouse"/>
</dbReference>
<dbReference type="AGR" id="MGI:2388042"/>
<dbReference type="CTD" id="194357"/>
<dbReference type="MGI" id="MGI:2388042">
    <property type="gene designation" value="Moxd2"/>
</dbReference>
<dbReference type="VEuPathDB" id="HostDB:ENSMUSG00000029885"/>
<dbReference type="eggNOG" id="KOG3568">
    <property type="taxonomic scope" value="Eukaryota"/>
</dbReference>
<dbReference type="GeneTree" id="ENSGT00530000063085"/>
<dbReference type="HOGENOM" id="CLU_017939_1_0_1"/>
<dbReference type="InParanoid" id="Q7TT41"/>
<dbReference type="OMA" id="NEMCLVF"/>
<dbReference type="OrthoDB" id="10003276at2759"/>
<dbReference type="PhylomeDB" id="Q7TT41"/>
<dbReference type="TreeFam" id="TF320698"/>
<dbReference type="BioGRID-ORCS" id="194357">
    <property type="hits" value="1 hit in 76 CRISPR screens"/>
</dbReference>
<dbReference type="PRO" id="PR:Q7TT41"/>
<dbReference type="Proteomes" id="UP000000589">
    <property type="component" value="Chromosome 6"/>
</dbReference>
<dbReference type="RNAct" id="Q7TT41">
    <property type="molecule type" value="protein"/>
</dbReference>
<dbReference type="Bgee" id="ENSMUSG00000029885">
    <property type="expression patterns" value="Expressed in olfactory epithelium and 21 other cell types or tissues"/>
</dbReference>
<dbReference type="GO" id="GO:0016020">
    <property type="term" value="C:membrane"/>
    <property type="evidence" value="ECO:0007669"/>
    <property type="project" value="UniProtKB-SubCell"/>
</dbReference>
<dbReference type="GO" id="GO:0005507">
    <property type="term" value="F:copper ion binding"/>
    <property type="evidence" value="ECO:0007669"/>
    <property type="project" value="InterPro"/>
</dbReference>
<dbReference type="GO" id="GO:0004500">
    <property type="term" value="F:dopamine beta-monooxygenase activity"/>
    <property type="evidence" value="ECO:0007669"/>
    <property type="project" value="InterPro"/>
</dbReference>
<dbReference type="CDD" id="cd09631">
    <property type="entry name" value="DOMON_DOH"/>
    <property type="match status" value="1"/>
</dbReference>
<dbReference type="FunFam" id="2.60.120.230:FF:000001">
    <property type="entry name" value="Monooxygenase, DBH-like 1"/>
    <property type="match status" value="1"/>
</dbReference>
<dbReference type="FunFam" id="2.60.120.310:FF:000006">
    <property type="entry name" value="Monooxygenase, DBH-like 2, pseudogene"/>
    <property type="match status" value="1"/>
</dbReference>
<dbReference type="Gene3D" id="2.60.120.230">
    <property type="match status" value="1"/>
</dbReference>
<dbReference type="Gene3D" id="2.60.120.310">
    <property type="entry name" value="Copper type II, ascorbate-dependent monooxygenase, N-terminal domain"/>
    <property type="match status" value="1"/>
</dbReference>
<dbReference type="InterPro" id="IPR014784">
    <property type="entry name" value="Cu2_ascorb_mOase-like_C"/>
</dbReference>
<dbReference type="InterPro" id="IPR000323">
    <property type="entry name" value="Cu2_ascorb_mOase_N"/>
</dbReference>
<dbReference type="InterPro" id="IPR036939">
    <property type="entry name" value="Cu2_ascorb_mOase_N_sf"/>
</dbReference>
<dbReference type="InterPro" id="IPR024548">
    <property type="entry name" value="Cu2_monoox_C"/>
</dbReference>
<dbReference type="InterPro" id="IPR000945">
    <property type="entry name" value="DBH-like"/>
</dbReference>
<dbReference type="InterPro" id="IPR045266">
    <property type="entry name" value="DOH_DOMON"/>
</dbReference>
<dbReference type="InterPro" id="IPR005018">
    <property type="entry name" value="DOMON_domain"/>
</dbReference>
<dbReference type="InterPro" id="IPR008977">
    <property type="entry name" value="PHM/PNGase_F_dom_sf"/>
</dbReference>
<dbReference type="InterPro" id="IPR028460">
    <property type="entry name" value="Tbh/DBH"/>
</dbReference>
<dbReference type="PANTHER" id="PTHR10157:SF31">
    <property type="entry name" value="DBH-LIKE MONOOXYGENASE PROTEIN 2-RELATED"/>
    <property type="match status" value="1"/>
</dbReference>
<dbReference type="PANTHER" id="PTHR10157">
    <property type="entry name" value="DOPAMINE BETA HYDROXYLASE RELATED"/>
    <property type="match status" value="1"/>
</dbReference>
<dbReference type="Pfam" id="PF03712">
    <property type="entry name" value="Cu2_monoox_C"/>
    <property type="match status" value="1"/>
</dbReference>
<dbReference type="Pfam" id="PF01082">
    <property type="entry name" value="Cu2_monooxygen"/>
    <property type="match status" value="1"/>
</dbReference>
<dbReference type="Pfam" id="PF03351">
    <property type="entry name" value="DOMON"/>
    <property type="match status" value="1"/>
</dbReference>
<dbReference type="PRINTS" id="PR00767">
    <property type="entry name" value="DBMONOXGNASE"/>
</dbReference>
<dbReference type="SMART" id="SM00664">
    <property type="entry name" value="DoH"/>
    <property type="match status" value="1"/>
</dbReference>
<dbReference type="SUPFAM" id="SSF49742">
    <property type="entry name" value="PHM/PNGase F"/>
    <property type="match status" value="2"/>
</dbReference>
<dbReference type="PROSITE" id="PS50836">
    <property type="entry name" value="DOMON"/>
    <property type="match status" value="1"/>
</dbReference>